<organism>
    <name type="scientific">Variovorax paradoxus (strain S110)</name>
    <dbReference type="NCBI Taxonomy" id="543728"/>
    <lineage>
        <taxon>Bacteria</taxon>
        <taxon>Pseudomonadati</taxon>
        <taxon>Pseudomonadota</taxon>
        <taxon>Betaproteobacteria</taxon>
        <taxon>Burkholderiales</taxon>
        <taxon>Comamonadaceae</taxon>
        <taxon>Variovorax</taxon>
    </lineage>
</organism>
<evidence type="ECO:0000255" key="1">
    <source>
        <dbReference type="HAMAP-Rule" id="MF_00046"/>
    </source>
</evidence>
<comment type="function">
    <text evidence="1">Cell wall formation.</text>
</comment>
<comment type="catalytic activity">
    <reaction evidence="1">
        <text>UDP-N-acetyl-alpha-D-muramate + L-alanine + ATP = UDP-N-acetyl-alpha-D-muramoyl-L-alanine + ADP + phosphate + H(+)</text>
        <dbReference type="Rhea" id="RHEA:23372"/>
        <dbReference type="ChEBI" id="CHEBI:15378"/>
        <dbReference type="ChEBI" id="CHEBI:30616"/>
        <dbReference type="ChEBI" id="CHEBI:43474"/>
        <dbReference type="ChEBI" id="CHEBI:57972"/>
        <dbReference type="ChEBI" id="CHEBI:70757"/>
        <dbReference type="ChEBI" id="CHEBI:83898"/>
        <dbReference type="ChEBI" id="CHEBI:456216"/>
        <dbReference type="EC" id="6.3.2.8"/>
    </reaction>
</comment>
<comment type="pathway">
    <text evidence="1">Cell wall biogenesis; peptidoglycan biosynthesis.</text>
</comment>
<comment type="subcellular location">
    <subcellularLocation>
        <location evidence="1">Cytoplasm</location>
    </subcellularLocation>
</comment>
<comment type="similarity">
    <text evidence="1">Belongs to the MurCDEF family.</text>
</comment>
<name>MURC_VARPS</name>
<protein>
    <recommendedName>
        <fullName evidence="1">UDP-N-acetylmuramate--L-alanine ligase</fullName>
        <ecNumber evidence="1">6.3.2.8</ecNumber>
    </recommendedName>
    <alternativeName>
        <fullName evidence="1">UDP-N-acetylmuramoyl-L-alanine synthetase</fullName>
    </alternativeName>
</protein>
<gene>
    <name evidence="1" type="primary">murC</name>
    <name type="ordered locus">Vapar_0920</name>
</gene>
<proteinExistence type="inferred from homology"/>
<feature type="chain" id="PRO_1000202193" description="UDP-N-acetylmuramate--L-alanine ligase">
    <location>
        <begin position="1"/>
        <end position="485"/>
    </location>
</feature>
<feature type="binding site" evidence="1">
    <location>
        <begin position="112"/>
        <end position="118"/>
    </location>
    <ligand>
        <name>ATP</name>
        <dbReference type="ChEBI" id="CHEBI:30616"/>
    </ligand>
</feature>
<accession>C5CNF5</accession>
<sequence length="485" mass="50866">MKHAIRHIHFVGIGGSGMSGIAEVLFNLGYRITGSDLADSATLRRLAGLGIGTFVGHAAAHIDGADAVVTSTAVQSDNPEVLAAREKRIPVVPRALMLAELMRLKQGIAIAGTHGKTTTTSLVASVLDAAGLDPTFVIGGRLNSAGANAQLGSGDYIVVEADESDASFLNLLPVMAVVTNIDADHMETYGHDFAKLKKAFVDFLHRMPFYGVAILCTDDPAVRDIVAEVTCPVTSYGFGEEAQVRAIDVRAVGGQMHFTAQRRNGVTLPDLPIVLNLPGEHNVRNALSVIAVAVELGIPDEAVQRGLAGFKGVGRRFQSYGEVAAQGEPAGSFTVIDDYGHHPVEMAATIAAARGAFPGRRLVLAFQPHRYTRTRDCFEDFVKVIGNADAVLLGEVYAAGEPPIVAADGRTLARALRVAGKVEPVFVDDIGAMPQAILDNARAGDVVLCMGAGSIGAVPGKVVEIAAAASLPQQTTRTRRKGEAS</sequence>
<reference key="1">
    <citation type="journal article" date="2011" name="J. Bacteriol.">
        <title>Complete genome sequence of the metabolically versatile plant growth-promoting endophyte, Variovorax paradoxus S110.</title>
        <authorList>
            <person name="Han J.I."/>
            <person name="Choi H.K."/>
            <person name="Lee S.W."/>
            <person name="Orwin P.M."/>
            <person name="Kim J."/>
            <person name="Laroe S.L."/>
            <person name="Kim T.G."/>
            <person name="O'Neil J."/>
            <person name="Leadbetter J.R."/>
            <person name="Lee S.Y."/>
            <person name="Hur C.G."/>
            <person name="Spain J.C."/>
            <person name="Ovchinnikova G."/>
            <person name="Goodwin L."/>
            <person name="Han C."/>
        </authorList>
    </citation>
    <scope>NUCLEOTIDE SEQUENCE [LARGE SCALE GENOMIC DNA]</scope>
    <source>
        <strain>S110</strain>
    </source>
</reference>
<dbReference type="EC" id="6.3.2.8" evidence="1"/>
<dbReference type="EMBL" id="CP001635">
    <property type="protein sequence ID" value="ACS17571.1"/>
    <property type="molecule type" value="Genomic_DNA"/>
</dbReference>
<dbReference type="SMR" id="C5CNF5"/>
<dbReference type="STRING" id="543728.Vapar_0920"/>
<dbReference type="KEGG" id="vap:Vapar_0920"/>
<dbReference type="eggNOG" id="COG0773">
    <property type="taxonomic scope" value="Bacteria"/>
</dbReference>
<dbReference type="HOGENOM" id="CLU_028104_2_2_4"/>
<dbReference type="OrthoDB" id="9804126at2"/>
<dbReference type="UniPathway" id="UPA00219"/>
<dbReference type="GO" id="GO:0005737">
    <property type="term" value="C:cytoplasm"/>
    <property type="evidence" value="ECO:0007669"/>
    <property type="project" value="UniProtKB-SubCell"/>
</dbReference>
<dbReference type="GO" id="GO:0005524">
    <property type="term" value="F:ATP binding"/>
    <property type="evidence" value="ECO:0007669"/>
    <property type="project" value="UniProtKB-UniRule"/>
</dbReference>
<dbReference type="GO" id="GO:0008763">
    <property type="term" value="F:UDP-N-acetylmuramate-L-alanine ligase activity"/>
    <property type="evidence" value="ECO:0007669"/>
    <property type="project" value="UniProtKB-UniRule"/>
</dbReference>
<dbReference type="GO" id="GO:0051301">
    <property type="term" value="P:cell division"/>
    <property type="evidence" value="ECO:0007669"/>
    <property type="project" value="UniProtKB-KW"/>
</dbReference>
<dbReference type="GO" id="GO:0071555">
    <property type="term" value="P:cell wall organization"/>
    <property type="evidence" value="ECO:0007669"/>
    <property type="project" value="UniProtKB-KW"/>
</dbReference>
<dbReference type="GO" id="GO:0009252">
    <property type="term" value="P:peptidoglycan biosynthetic process"/>
    <property type="evidence" value="ECO:0007669"/>
    <property type="project" value="UniProtKB-UniRule"/>
</dbReference>
<dbReference type="GO" id="GO:0008360">
    <property type="term" value="P:regulation of cell shape"/>
    <property type="evidence" value="ECO:0007669"/>
    <property type="project" value="UniProtKB-KW"/>
</dbReference>
<dbReference type="FunFam" id="3.40.1190.10:FF:000001">
    <property type="entry name" value="UDP-N-acetylmuramate--L-alanine ligase"/>
    <property type="match status" value="1"/>
</dbReference>
<dbReference type="Gene3D" id="3.90.190.20">
    <property type="entry name" value="Mur ligase, C-terminal domain"/>
    <property type="match status" value="1"/>
</dbReference>
<dbReference type="Gene3D" id="3.40.1190.10">
    <property type="entry name" value="Mur-like, catalytic domain"/>
    <property type="match status" value="1"/>
</dbReference>
<dbReference type="Gene3D" id="3.40.50.720">
    <property type="entry name" value="NAD(P)-binding Rossmann-like Domain"/>
    <property type="match status" value="1"/>
</dbReference>
<dbReference type="HAMAP" id="MF_00046">
    <property type="entry name" value="MurC"/>
    <property type="match status" value="1"/>
</dbReference>
<dbReference type="InterPro" id="IPR036565">
    <property type="entry name" value="Mur-like_cat_sf"/>
</dbReference>
<dbReference type="InterPro" id="IPR004101">
    <property type="entry name" value="Mur_ligase_C"/>
</dbReference>
<dbReference type="InterPro" id="IPR036615">
    <property type="entry name" value="Mur_ligase_C_dom_sf"/>
</dbReference>
<dbReference type="InterPro" id="IPR013221">
    <property type="entry name" value="Mur_ligase_cen"/>
</dbReference>
<dbReference type="InterPro" id="IPR000713">
    <property type="entry name" value="Mur_ligase_N"/>
</dbReference>
<dbReference type="InterPro" id="IPR050061">
    <property type="entry name" value="MurCDEF_pg_biosynth"/>
</dbReference>
<dbReference type="InterPro" id="IPR005758">
    <property type="entry name" value="UDP-N-AcMur_Ala_ligase_MurC"/>
</dbReference>
<dbReference type="NCBIfam" id="TIGR01082">
    <property type="entry name" value="murC"/>
    <property type="match status" value="1"/>
</dbReference>
<dbReference type="PANTHER" id="PTHR43445:SF3">
    <property type="entry name" value="UDP-N-ACETYLMURAMATE--L-ALANINE LIGASE"/>
    <property type="match status" value="1"/>
</dbReference>
<dbReference type="PANTHER" id="PTHR43445">
    <property type="entry name" value="UDP-N-ACETYLMURAMATE--L-ALANINE LIGASE-RELATED"/>
    <property type="match status" value="1"/>
</dbReference>
<dbReference type="Pfam" id="PF01225">
    <property type="entry name" value="Mur_ligase"/>
    <property type="match status" value="1"/>
</dbReference>
<dbReference type="Pfam" id="PF02875">
    <property type="entry name" value="Mur_ligase_C"/>
    <property type="match status" value="1"/>
</dbReference>
<dbReference type="Pfam" id="PF08245">
    <property type="entry name" value="Mur_ligase_M"/>
    <property type="match status" value="1"/>
</dbReference>
<dbReference type="SUPFAM" id="SSF51984">
    <property type="entry name" value="MurCD N-terminal domain"/>
    <property type="match status" value="1"/>
</dbReference>
<dbReference type="SUPFAM" id="SSF53623">
    <property type="entry name" value="MurD-like peptide ligases, catalytic domain"/>
    <property type="match status" value="1"/>
</dbReference>
<dbReference type="SUPFAM" id="SSF53244">
    <property type="entry name" value="MurD-like peptide ligases, peptide-binding domain"/>
    <property type="match status" value="1"/>
</dbReference>
<keyword id="KW-0067">ATP-binding</keyword>
<keyword id="KW-0131">Cell cycle</keyword>
<keyword id="KW-0132">Cell division</keyword>
<keyword id="KW-0133">Cell shape</keyword>
<keyword id="KW-0961">Cell wall biogenesis/degradation</keyword>
<keyword id="KW-0963">Cytoplasm</keyword>
<keyword id="KW-0436">Ligase</keyword>
<keyword id="KW-0547">Nucleotide-binding</keyword>
<keyword id="KW-0573">Peptidoglycan synthesis</keyword>